<comment type="catalytic activity">
    <reaction evidence="1">
        <text>L-homoserine + ATP = O-phospho-L-homoserine + ADP + H(+)</text>
        <dbReference type="Rhea" id="RHEA:13985"/>
        <dbReference type="ChEBI" id="CHEBI:15378"/>
        <dbReference type="ChEBI" id="CHEBI:30616"/>
        <dbReference type="ChEBI" id="CHEBI:57476"/>
        <dbReference type="ChEBI" id="CHEBI:57590"/>
        <dbReference type="ChEBI" id="CHEBI:456216"/>
        <dbReference type="EC" id="2.7.1.39"/>
    </reaction>
</comment>
<comment type="pathway">
    <text evidence="1">Amino-acid biosynthesis; L-threonine biosynthesis; L-threonine from L-aspartate: step 4/5.</text>
</comment>
<comment type="similarity">
    <text evidence="1">Belongs to the pseudomonas-type ThrB family.</text>
</comment>
<accession>B0UKH0</accession>
<organism>
    <name type="scientific">Methylobacterium sp. (strain 4-46)</name>
    <dbReference type="NCBI Taxonomy" id="426117"/>
    <lineage>
        <taxon>Bacteria</taxon>
        <taxon>Pseudomonadati</taxon>
        <taxon>Pseudomonadota</taxon>
        <taxon>Alphaproteobacteria</taxon>
        <taxon>Hyphomicrobiales</taxon>
        <taxon>Methylobacteriaceae</taxon>
        <taxon>Methylobacterium</taxon>
    </lineage>
</organism>
<keyword id="KW-0028">Amino-acid biosynthesis</keyword>
<keyword id="KW-0067">ATP-binding</keyword>
<keyword id="KW-0418">Kinase</keyword>
<keyword id="KW-0547">Nucleotide-binding</keyword>
<keyword id="KW-0791">Threonine biosynthesis</keyword>
<keyword id="KW-0808">Transferase</keyword>
<feature type="chain" id="PRO_1000115435" description="Homoserine kinase">
    <location>
        <begin position="1"/>
        <end position="321"/>
    </location>
</feature>
<name>KHSE_METS4</name>
<protein>
    <recommendedName>
        <fullName evidence="1">Homoserine kinase</fullName>
        <shortName evidence="1">HK</shortName>
        <shortName evidence="1">HSK</shortName>
        <ecNumber evidence="1">2.7.1.39</ecNumber>
    </recommendedName>
</protein>
<dbReference type="EC" id="2.7.1.39" evidence="1"/>
<dbReference type="EMBL" id="CP000943">
    <property type="protein sequence ID" value="ACA20303.1"/>
    <property type="molecule type" value="Genomic_DNA"/>
</dbReference>
<dbReference type="RefSeq" id="WP_012335681.1">
    <property type="nucleotide sequence ID" value="NC_010511.1"/>
</dbReference>
<dbReference type="SMR" id="B0UKH0"/>
<dbReference type="STRING" id="426117.M446_6026"/>
<dbReference type="KEGG" id="met:M446_6026"/>
<dbReference type="eggNOG" id="COG2334">
    <property type="taxonomic scope" value="Bacteria"/>
</dbReference>
<dbReference type="HOGENOM" id="CLU_053300_1_0_5"/>
<dbReference type="UniPathway" id="UPA00050">
    <property type="reaction ID" value="UER00064"/>
</dbReference>
<dbReference type="GO" id="GO:0005524">
    <property type="term" value="F:ATP binding"/>
    <property type="evidence" value="ECO:0007669"/>
    <property type="project" value="UniProtKB-KW"/>
</dbReference>
<dbReference type="GO" id="GO:0004413">
    <property type="term" value="F:homoserine kinase activity"/>
    <property type="evidence" value="ECO:0007669"/>
    <property type="project" value="UniProtKB-UniRule"/>
</dbReference>
<dbReference type="GO" id="GO:0009088">
    <property type="term" value="P:threonine biosynthetic process"/>
    <property type="evidence" value="ECO:0007669"/>
    <property type="project" value="UniProtKB-UniRule"/>
</dbReference>
<dbReference type="CDD" id="cd05153">
    <property type="entry name" value="HomoserineK_II"/>
    <property type="match status" value="1"/>
</dbReference>
<dbReference type="Gene3D" id="3.90.1200.10">
    <property type="match status" value="1"/>
</dbReference>
<dbReference type="Gene3D" id="3.30.200.20">
    <property type="entry name" value="Phosphorylase Kinase, domain 1"/>
    <property type="match status" value="1"/>
</dbReference>
<dbReference type="HAMAP" id="MF_00301">
    <property type="entry name" value="Homoser_kinase_2"/>
    <property type="match status" value="1"/>
</dbReference>
<dbReference type="InterPro" id="IPR002575">
    <property type="entry name" value="Aminoglycoside_PTrfase"/>
</dbReference>
<dbReference type="InterPro" id="IPR005280">
    <property type="entry name" value="Homoserine_kinase_II"/>
</dbReference>
<dbReference type="InterPro" id="IPR011009">
    <property type="entry name" value="Kinase-like_dom_sf"/>
</dbReference>
<dbReference type="InterPro" id="IPR050249">
    <property type="entry name" value="Pseudomonas-type_ThrB"/>
</dbReference>
<dbReference type="NCBIfam" id="NF003558">
    <property type="entry name" value="PRK05231.1"/>
    <property type="match status" value="1"/>
</dbReference>
<dbReference type="NCBIfam" id="TIGR00938">
    <property type="entry name" value="thrB_alt"/>
    <property type="match status" value="1"/>
</dbReference>
<dbReference type="PANTHER" id="PTHR21064:SF6">
    <property type="entry name" value="AMINOGLYCOSIDE PHOSPHOTRANSFERASE DOMAIN-CONTAINING PROTEIN"/>
    <property type="match status" value="1"/>
</dbReference>
<dbReference type="PANTHER" id="PTHR21064">
    <property type="entry name" value="AMINOGLYCOSIDE PHOSPHOTRANSFERASE DOMAIN-CONTAINING PROTEIN-RELATED"/>
    <property type="match status" value="1"/>
</dbReference>
<dbReference type="Pfam" id="PF01636">
    <property type="entry name" value="APH"/>
    <property type="match status" value="1"/>
</dbReference>
<dbReference type="SUPFAM" id="SSF56112">
    <property type="entry name" value="Protein kinase-like (PK-like)"/>
    <property type="match status" value="1"/>
</dbReference>
<reference key="1">
    <citation type="submission" date="2008-02" db="EMBL/GenBank/DDBJ databases">
        <title>Complete sequence of chromosome of Methylobacterium sp. 4-46.</title>
        <authorList>
            <consortium name="US DOE Joint Genome Institute"/>
            <person name="Copeland A."/>
            <person name="Lucas S."/>
            <person name="Lapidus A."/>
            <person name="Glavina del Rio T."/>
            <person name="Dalin E."/>
            <person name="Tice H."/>
            <person name="Bruce D."/>
            <person name="Goodwin L."/>
            <person name="Pitluck S."/>
            <person name="Chertkov O."/>
            <person name="Brettin T."/>
            <person name="Detter J.C."/>
            <person name="Han C."/>
            <person name="Kuske C.R."/>
            <person name="Schmutz J."/>
            <person name="Larimer F."/>
            <person name="Land M."/>
            <person name="Hauser L."/>
            <person name="Kyrpides N."/>
            <person name="Ivanova N."/>
            <person name="Marx C.J."/>
            <person name="Richardson P."/>
        </authorList>
    </citation>
    <scope>NUCLEOTIDE SEQUENCE [LARGE SCALE GENOMIC DNA]</scope>
    <source>
        <strain>4-46</strain>
    </source>
</reference>
<proteinExistence type="inferred from homology"/>
<gene>
    <name evidence="1" type="primary">thrB</name>
    <name type="ordered locus">M446_6026</name>
</gene>
<sequence>MAVYTEVPDEALAAFLADYDIGGLLSYKGIAEGVENTNFYLHTTVGSYILTLYEKRVAEGDLPFFLGLMEHLAARGLACPQPIRNRAGTALGRLCGRPAVIVSFLDGVSVRRPGVRHCRALGRALAGLHAAGVDFPMRRPNALSVAAWRPLFAQAEAQADRVAPNLAARTRDDLARLEEAWPRDLPGGVIHADLFTDNVFFIGDAVSGLIDFYFACTDAFAYDLAICLNAWCFELDGSFNRTKGQAMIAAYQAARPLDPREVESLPLLARGAALRFMLTRLVDWLNVPPGALVKPKDPLEYDRKLAFHRRVTGAEEYGWTP</sequence>
<evidence type="ECO:0000255" key="1">
    <source>
        <dbReference type="HAMAP-Rule" id="MF_00301"/>
    </source>
</evidence>